<evidence type="ECO:0000250" key="1"/>
<evidence type="ECO:0000305" key="2"/>
<organism>
    <name type="scientific">Candida albicans</name>
    <name type="common">Yeast</name>
    <dbReference type="NCBI Taxonomy" id="5476"/>
    <lineage>
        <taxon>Eukaryota</taxon>
        <taxon>Fungi</taxon>
        <taxon>Dikarya</taxon>
        <taxon>Ascomycota</taxon>
        <taxon>Saccharomycotina</taxon>
        <taxon>Pichiomycetes</taxon>
        <taxon>Debaryomycetaceae</taxon>
        <taxon>Candida/Lodderomyces clade</taxon>
        <taxon>Candida</taxon>
    </lineage>
</organism>
<gene>
    <name type="primary">BET4</name>
</gene>
<keyword id="KW-0637">Prenyltransferase</keyword>
<keyword id="KW-0677">Repeat</keyword>
<keyword id="KW-0808">Transferase</keyword>
<comment type="function">
    <text evidence="1">Catalyzes the transfer of a geranyl-geranyl moiety from geranyl-geranyl pyrophosphate to proteins having the C-terminal -XCC or -XCXC, where both cysteines may become modified. Acts on YPT1 and SEC4 (By similarity).</text>
</comment>
<comment type="catalytic activity">
    <reaction>
        <text>geranylgeranyl diphosphate + L-cysteinyl-[protein] = S-geranylgeranyl-L-cysteinyl-[protein] + diphosphate</text>
        <dbReference type="Rhea" id="RHEA:21240"/>
        <dbReference type="Rhea" id="RHEA-COMP:10131"/>
        <dbReference type="Rhea" id="RHEA-COMP:11537"/>
        <dbReference type="ChEBI" id="CHEBI:29950"/>
        <dbReference type="ChEBI" id="CHEBI:33019"/>
        <dbReference type="ChEBI" id="CHEBI:57533"/>
        <dbReference type="ChEBI" id="CHEBI:86021"/>
        <dbReference type="EC" id="2.5.1.60"/>
    </reaction>
</comment>
<comment type="subunit">
    <text evidence="1">Heterodimer of an alpha and a beta subunit.</text>
</comment>
<comment type="similarity">
    <text evidence="2">Belongs to the protein prenyltransferase subunit alpha family.</text>
</comment>
<accession>O93829</accession>
<name>PGTA_CANAX</name>
<proteinExistence type="inferred from homology"/>
<feature type="chain" id="PRO_0000119755" description="Geranylgeranyl transferase type-2 subunit alpha">
    <location>
        <begin position="1"/>
        <end position="371"/>
    </location>
</feature>
<feature type="repeat" description="PFTA 1">
    <location>
        <begin position="45"/>
        <end position="79"/>
    </location>
</feature>
<feature type="repeat" description="PFTA 2">
    <location>
        <begin position="92"/>
        <end position="126"/>
    </location>
</feature>
<feature type="repeat" description="PFTA 3">
    <location>
        <begin position="131"/>
        <end position="165"/>
    </location>
</feature>
<feature type="repeat" description="PFTA 4">
    <location>
        <begin position="177"/>
        <end position="211"/>
    </location>
</feature>
<feature type="repeat" description="PFTA 5">
    <location>
        <begin position="242"/>
        <end position="276"/>
    </location>
</feature>
<sequence>MQHGIKRVKLSEEAKRLKLEKDQIKIKNYRQLTDEIFELRANENYSDEALIKTNELLIINPEFYTIWNYRREILINNYSSSNDKDDQIYEDILNQDLNFVLVQLKKFPKCYWIWNHRRWLLFELVKLGKVNWKYEFGVVSKLLDLDQRNFHGWHYRRFVVKNMELECKNDTTLILKINLDEFNYTTLKIQKDFSNFSAWHNRTKLIPKIYNLIQQQQQQQQKDGKIFGDLPGIELFQNPILLLKNDLEMIKTGVYMSPEDTSVWLYLYWLLTDDLFTNAFKSHQQDYMNILHEQLQLINEVNEMEKEDTGQDNVGCLKSMIFINALIQNENNKPVLTEQVKSCLKQLAKIDPLRKNKYLDQLAGNAPIFHH</sequence>
<reference key="1">
    <citation type="submission" date="1998-12" db="EMBL/GenBank/DDBJ databases">
        <title>Molecular cloning of BET4 gene from Candida albicans.</title>
        <authorList>
            <person name="Ishii N."/>
            <person name="Aoki Y."/>
            <person name="Arisawa M."/>
        </authorList>
    </citation>
    <scope>NUCLEOTIDE SEQUENCE [GENOMIC DNA]</scope>
    <source>
        <strain>ATCC 10231 / CBS 6431 / CIP 48.72 / DSM 1386 / NBRC 1594</strain>
    </source>
</reference>
<dbReference type="EC" id="2.5.1.60"/>
<dbReference type="EMBL" id="AB021170">
    <property type="protein sequence ID" value="BAA35192.1"/>
    <property type="molecule type" value="Genomic_DNA"/>
</dbReference>
<dbReference type="SMR" id="O93829"/>
<dbReference type="VEuPathDB" id="FungiDB:C1_04070C_A"/>
<dbReference type="VEuPathDB" id="FungiDB:CAWG_00986"/>
<dbReference type="GO" id="GO:0005968">
    <property type="term" value="C:Rab-protein geranylgeranyltransferase complex"/>
    <property type="evidence" value="ECO:0000250"/>
    <property type="project" value="UniProtKB"/>
</dbReference>
<dbReference type="GO" id="GO:0004663">
    <property type="term" value="F:Rab geranylgeranyltransferase activity"/>
    <property type="evidence" value="ECO:0000250"/>
    <property type="project" value="UniProtKB"/>
</dbReference>
<dbReference type="GO" id="GO:0031267">
    <property type="term" value="F:small GTPase binding"/>
    <property type="evidence" value="ECO:0000250"/>
    <property type="project" value="UniProtKB"/>
</dbReference>
<dbReference type="GO" id="GO:0018344">
    <property type="term" value="P:protein geranylgeranylation"/>
    <property type="evidence" value="ECO:0000250"/>
    <property type="project" value="UniProtKB"/>
</dbReference>
<dbReference type="FunFam" id="1.25.40.120:FF:000016">
    <property type="entry name" value="Geranylgeranyltransferase type II alpha subunit"/>
    <property type="match status" value="1"/>
</dbReference>
<dbReference type="Gene3D" id="1.25.40.120">
    <property type="entry name" value="Protein prenylyltransferase"/>
    <property type="match status" value="1"/>
</dbReference>
<dbReference type="InterPro" id="IPR002088">
    <property type="entry name" value="Prenyl_trans_a"/>
</dbReference>
<dbReference type="PANTHER" id="PTHR11129:SF2">
    <property type="entry name" value="GERANYLGERANYL TRANSFERASE TYPE-2 SUBUNIT ALPHA"/>
    <property type="match status" value="1"/>
</dbReference>
<dbReference type="PANTHER" id="PTHR11129">
    <property type="entry name" value="PROTEIN FARNESYLTRANSFERASE ALPHA SUBUNIT/RAB GERANYLGERANYL TRANSFERASE ALPHA SUBUNIT"/>
    <property type="match status" value="1"/>
</dbReference>
<dbReference type="Pfam" id="PF01239">
    <property type="entry name" value="PPTA"/>
    <property type="match status" value="4"/>
</dbReference>
<dbReference type="SUPFAM" id="SSF48439">
    <property type="entry name" value="Protein prenylyltransferase"/>
    <property type="match status" value="1"/>
</dbReference>
<dbReference type="PROSITE" id="PS51147">
    <property type="entry name" value="PFTA"/>
    <property type="match status" value="5"/>
</dbReference>
<protein>
    <recommendedName>
        <fullName>Geranylgeranyl transferase type-2 subunit alpha</fullName>
        <ecNumber>2.5.1.60</ecNumber>
    </recommendedName>
    <alternativeName>
        <fullName>GGTase-II-alpha</fullName>
    </alternativeName>
    <alternativeName>
        <fullName>Geranylgeranyl transferase type II subunit alpha</fullName>
    </alternativeName>
    <alternativeName>
        <fullName>PGGT</fullName>
    </alternativeName>
    <alternativeName>
        <fullName>Type II protein geranyl-geranyltransferase subunit alpha</fullName>
    </alternativeName>
    <alternativeName>
        <fullName>YPT1/SEC4 proteins geranylgeranyltransferase subunit alpha</fullName>
    </alternativeName>
</protein>